<evidence type="ECO:0000255" key="1">
    <source>
        <dbReference type="HAMAP-Rule" id="MF_01343"/>
    </source>
</evidence>
<evidence type="ECO:0000305" key="2"/>
<organism>
    <name type="scientific">Saccharopolyspora erythraea (strain ATCC 11635 / DSM 40517 / JCM 4748 / NBRC 13426 / NCIMB 8594 / NRRL 2338)</name>
    <dbReference type="NCBI Taxonomy" id="405948"/>
    <lineage>
        <taxon>Bacteria</taxon>
        <taxon>Bacillati</taxon>
        <taxon>Actinomycetota</taxon>
        <taxon>Actinomycetes</taxon>
        <taxon>Pseudonocardiales</taxon>
        <taxon>Pseudonocardiaceae</taxon>
        <taxon>Saccharopolyspora</taxon>
    </lineage>
</organism>
<protein>
    <recommendedName>
        <fullName evidence="1">Small ribosomal subunit protein uS15</fullName>
    </recommendedName>
    <alternativeName>
        <fullName evidence="2">30S ribosomal protein S15</fullName>
    </alternativeName>
</protein>
<dbReference type="EMBL" id="AM420293">
    <property type="protein sequence ID" value="CAM05098.1"/>
    <property type="molecule type" value="Genomic_DNA"/>
</dbReference>
<dbReference type="RefSeq" id="WP_011874883.1">
    <property type="nucleotide sequence ID" value="NC_009142.1"/>
</dbReference>
<dbReference type="SMR" id="A4FM23"/>
<dbReference type="STRING" id="405948.SACE_5915"/>
<dbReference type="KEGG" id="sen:SACE_5915"/>
<dbReference type="eggNOG" id="COG0184">
    <property type="taxonomic scope" value="Bacteria"/>
</dbReference>
<dbReference type="HOGENOM" id="CLU_148518_0_0_11"/>
<dbReference type="OrthoDB" id="9799262at2"/>
<dbReference type="Proteomes" id="UP000006728">
    <property type="component" value="Chromosome"/>
</dbReference>
<dbReference type="GO" id="GO:0022627">
    <property type="term" value="C:cytosolic small ribosomal subunit"/>
    <property type="evidence" value="ECO:0007669"/>
    <property type="project" value="TreeGrafter"/>
</dbReference>
<dbReference type="GO" id="GO:0019843">
    <property type="term" value="F:rRNA binding"/>
    <property type="evidence" value="ECO:0007669"/>
    <property type="project" value="UniProtKB-UniRule"/>
</dbReference>
<dbReference type="GO" id="GO:0003735">
    <property type="term" value="F:structural constituent of ribosome"/>
    <property type="evidence" value="ECO:0007669"/>
    <property type="project" value="InterPro"/>
</dbReference>
<dbReference type="GO" id="GO:0006412">
    <property type="term" value="P:translation"/>
    <property type="evidence" value="ECO:0007669"/>
    <property type="project" value="UniProtKB-UniRule"/>
</dbReference>
<dbReference type="CDD" id="cd00353">
    <property type="entry name" value="Ribosomal_S15p_S13e"/>
    <property type="match status" value="1"/>
</dbReference>
<dbReference type="FunFam" id="1.10.287.10:FF:000002">
    <property type="entry name" value="30S ribosomal protein S15"/>
    <property type="match status" value="1"/>
</dbReference>
<dbReference type="Gene3D" id="6.10.250.3130">
    <property type="match status" value="1"/>
</dbReference>
<dbReference type="Gene3D" id="1.10.287.10">
    <property type="entry name" value="S15/NS1, RNA-binding"/>
    <property type="match status" value="1"/>
</dbReference>
<dbReference type="HAMAP" id="MF_01343_B">
    <property type="entry name" value="Ribosomal_uS15_B"/>
    <property type="match status" value="1"/>
</dbReference>
<dbReference type="InterPro" id="IPR000589">
    <property type="entry name" value="Ribosomal_uS15"/>
</dbReference>
<dbReference type="InterPro" id="IPR005290">
    <property type="entry name" value="Ribosomal_uS15_bac-type"/>
</dbReference>
<dbReference type="InterPro" id="IPR009068">
    <property type="entry name" value="uS15_NS1_RNA-bd_sf"/>
</dbReference>
<dbReference type="NCBIfam" id="TIGR00952">
    <property type="entry name" value="S15_bact"/>
    <property type="match status" value="1"/>
</dbReference>
<dbReference type="PANTHER" id="PTHR23321">
    <property type="entry name" value="RIBOSOMAL PROTEIN S15, BACTERIAL AND ORGANELLAR"/>
    <property type="match status" value="1"/>
</dbReference>
<dbReference type="PANTHER" id="PTHR23321:SF26">
    <property type="entry name" value="SMALL RIBOSOMAL SUBUNIT PROTEIN US15M"/>
    <property type="match status" value="1"/>
</dbReference>
<dbReference type="Pfam" id="PF00312">
    <property type="entry name" value="Ribosomal_S15"/>
    <property type="match status" value="1"/>
</dbReference>
<dbReference type="SMART" id="SM01387">
    <property type="entry name" value="Ribosomal_S15"/>
    <property type="match status" value="1"/>
</dbReference>
<dbReference type="SUPFAM" id="SSF47060">
    <property type="entry name" value="S15/NS1 RNA-binding domain"/>
    <property type="match status" value="1"/>
</dbReference>
<dbReference type="PROSITE" id="PS00362">
    <property type="entry name" value="RIBOSOMAL_S15"/>
    <property type="match status" value="1"/>
</dbReference>
<reference key="1">
    <citation type="journal article" date="2007" name="Nat. Biotechnol.">
        <title>Complete genome sequence of the erythromycin-producing bacterium Saccharopolyspora erythraea NRRL23338.</title>
        <authorList>
            <person name="Oliynyk M."/>
            <person name="Samborskyy M."/>
            <person name="Lester J.B."/>
            <person name="Mironenko T."/>
            <person name="Scott N."/>
            <person name="Dickens S."/>
            <person name="Haydock S.F."/>
            <person name="Leadlay P.F."/>
        </authorList>
    </citation>
    <scope>NUCLEOTIDE SEQUENCE [LARGE SCALE GENOMIC DNA]</scope>
    <source>
        <strain>ATCC 11635 / DSM 40517 / JCM 4748 / NBRC 13426 / NCIMB 8594 / NRRL 2338</strain>
    </source>
</reference>
<comment type="function">
    <text evidence="1">One of the primary rRNA binding proteins, it binds directly to 16S rRNA where it helps nucleate assembly of the platform of the 30S subunit by binding and bridging several RNA helices of the 16S rRNA.</text>
</comment>
<comment type="function">
    <text evidence="1">Forms an intersubunit bridge (bridge B4) with the 23S rRNA of the 50S subunit in the ribosome.</text>
</comment>
<comment type="subunit">
    <text evidence="1">Part of the 30S ribosomal subunit. Forms a bridge to the 50S subunit in the 70S ribosome, contacting the 23S rRNA.</text>
</comment>
<comment type="similarity">
    <text evidence="1">Belongs to the universal ribosomal protein uS15 family.</text>
</comment>
<feature type="chain" id="PRO_1000054863" description="Small ribosomal subunit protein uS15">
    <location>
        <begin position="1"/>
        <end position="89"/>
    </location>
</feature>
<sequence>MALSTAEKKQILAEYGLHDSDTGSAEAQVALLTKRIIGLTEHLKQHKHDHHSRRGLLLMVGRRRRLLNYLTKVDIERYRSLIQRLGLRR</sequence>
<keyword id="KW-1185">Reference proteome</keyword>
<keyword id="KW-0687">Ribonucleoprotein</keyword>
<keyword id="KW-0689">Ribosomal protein</keyword>
<keyword id="KW-0694">RNA-binding</keyword>
<keyword id="KW-0699">rRNA-binding</keyword>
<name>RS15_SACEN</name>
<gene>
    <name evidence="1" type="primary">rpsO</name>
    <name type="ordered locus">SACE_5915</name>
</gene>
<accession>A4FM23</accession>
<proteinExistence type="inferred from homology"/>